<comment type="function">
    <molecule>Envelope glycoprotein gp160</molecule>
    <text evidence="1">Oligomerizes in the host endoplasmic reticulum into predominantly trimers. In a second time, gp160 transits in the host Golgi, where glycosylation is completed. The precursor is then proteolytically cleaved in the trans-Golgi and thereby activated by cellular furin or furin-like proteases to produce gp120 and gp41.</text>
</comment>
<comment type="function">
    <molecule>Surface protein gp120</molecule>
    <text evidence="1">Attaches the virus to the host lymphoid cell by binding to the primary receptor CD4. This interaction induces a structural rearrangement creating a high affinity binding site for a chemokine coreceptor like CXCR4 and/or CCR5. Acts as a ligand for CD209/DC-SIGN and CLEC4M/DC-SIGNR, which are respectively found on dendritic cells (DCs), and on endothelial cells of liver sinusoids and lymph node sinuses. These interactions allow capture of viral particles at mucosal surfaces by these cells and subsequent transmission to permissive cells. HIV subverts the migration properties of dendritic cells to gain access to CD4+ T-cells in lymph nodes. Virus transmission to permissive T-cells occurs either in trans (without DCs infection, through viral capture and transmission), or in cis (following DCs productive infection, through the usual CD4-gp120 interaction), thereby inducing a robust infection. In trans infection, bound virions remain infectious over days and it is proposed that they are not degraded, but protected in non-lysosomal acidic organelles within the DCs close to the cell membrane thus contributing to the viral infectious potential during DCs' migration from the periphery to the lymphoid tissues. On arrival at lymphoid tissues, intact virions recycle back to DCs' cell surface allowing virus transmission to CD4+ T-cells.</text>
</comment>
<comment type="function">
    <molecule>Transmembrane protein gp41</molecule>
    <text evidence="1">Acts as a class I viral fusion protein. Under the current model, the protein has at least 3 conformational states: pre-fusion native state, pre-hairpin intermediate state, and post-fusion hairpin state. During fusion of viral and target intracellular membranes, the coiled coil regions (heptad repeats) assume a trimer-of-hairpins structure, positioning the fusion peptide in close proximity to the C-terminal region of the ectodomain. The formation of this structure appears to drive apposition and subsequent fusion of viral and target cell membranes. Complete fusion occurs in host cell endosomes and is dynamin-dependent, however some lipid transfer might occur at the plasma membrane. The virus undergoes clathrin-dependent internalization long before endosomal fusion, thus minimizing the surface exposure of conserved viral epitopes during fusion and reducing the efficacy of inhibitors targeting these epitopes. Membranes fusion leads to delivery of the nucleocapsid into the cytoplasm.</text>
</comment>
<comment type="subunit">
    <molecule>Surface protein gp120</molecule>
    <text evidence="1">The mature envelope protein (Env) consists of a homotrimer of non-covalently associated gp120-gp41 heterodimers. The resulting complex protrudes from the virus surface as a spike. There seems to be as few as 10 spikes on the average virion. Interacts with host CD4, CCR5 and CXCR4. Gp120 also interacts with the C-type lectins CD209/DC-SIGN and CLEC4M/DC-SIGNR (collectively referred to as DC-SIGN(R)). Gp120 and gp41 interact with GalCer. Gp120 interacts with host ITGA4/ITGB7 complex; on CD4+ T-cells, this interaction results in rapid activation of integrin ITGAL/LFA-1, which facilitates efficient cell-to-cell spreading of HIV-1. Gp120 interacts with cell-associated heparan sulfate; this interaction increases virus infectivity on permissive cells and may be involved in infection of CD4- cells.</text>
</comment>
<comment type="subunit">
    <molecule>Transmembrane protein gp41</molecule>
    <text evidence="1">The mature envelope protein (Env) consists of a homotrimer of non-covalently associated gp120-gp41 heterodimers. The resulting complex protrudes from the virus surface as a spike. There seems to be as few as 10 spikes on the average virion.</text>
</comment>
<comment type="subcellular location">
    <molecule>Surface protein gp120</molecule>
    <subcellularLocation>
        <location evidence="1">Virion membrane</location>
        <topology evidence="1">Peripheral membrane protein</topology>
    </subcellularLocation>
    <subcellularLocation>
        <location evidence="1">Host cell membrane</location>
        <topology evidence="1">Peripheral membrane protein</topology>
    </subcellularLocation>
    <subcellularLocation>
        <location evidence="1">Host endosome membrane</location>
        <topology evidence="1">Single-pass type I membrane protein</topology>
    </subcellularLocation>
    <text evidence="1">The surface protein is not anchored to the viral envelope, but associates with the extravirion surface through its binding to TM. It is probably concentrated at the site of budding and incorporated into the virions possibly by contacts between the cytoplasmic tail of Env and the N-terminus of Gag.</text>
</comment>
<comment type="subcellular location">
    <molecule>Transmembrane protein gp41</molecule>
    <subcellularLocation>
        <location evidence="1">Virion membrane</location>
        <topology evidence="1">Single-pass type I membrane protein</topology>
    </subcellularLocation>
    <subcellularLocation>
        <location evidence="1">Host cell membrane</location>
        <topology evidence="1">Single-pass type I membrane protein</topology>
    </subcellularLocation>
    <subcellularLocation>
        <location evidence="1">Host endosome membrane</location>
        <topology evidence="1">Single-pass type I membrane protein</topology>
    </subcellularLocation>
    <text evidence="1">It is probably concentrated at the site of budding and incorporated into the virions possibly by contacts between the cytoplasmic tail of Env and the N-terminus of Gag.</text>
</comment>
<comment type="domain">
    <text evidence="1">Some of the most genetically diverse regions of the viral genome are present in Env. They are called variable regions 1 through 5 (V1 through V5). Coreceptor usage of gp120 is determined mainly by the primary structure of the third variable region (V3) in the outer domain of gp120. The sequence of V3 determines which coreceptor, CCR5 and/or CXCR4 (corresponding to R5/macrophage, X4/T cell and R5X4/T cell and macrophage tropism), is used to trigger the fusion potential of the Env complex, and hence which cells the virus can infect. Binding to CCR5 involves a region adjacent in addition to V3.</text>
</comment>
<comment type="domain">
    <text evidence="1">The membrane proximal external region (MPER) present in gp41 is a tryptophan-rich region recognized by the antibodies 2F5, Z13, and 4E10. MPER seems to play a role in fusion.</text>
</comment>
<comment type="domain">
    <text evidence="1">The 17 amino acids long immunosuppressive region is present in many retroviral envelope proteins. Synthetic peptides derived from this relatively conserved sequence inhibit immune function in vitro and in vivo.</text>
</comment>
<comment type="domain">
    <text evidence="1">The YXXL motif is involved in determining the exact site of viral release at the surface of infected mononuclear cells and promotes endocytosis. YXXL and di-leucine endocytosis motifs interact directly or indirectly with the clathrin adapter complexes, opperate independently, and their activities are not additive.</text>
</comment>
<comment type="domain">
    <text evidence="1">The CD4-binding region is targeted by the antibody b12.</text>
</comment>
<comment type="PTM">
    <text evidence="1">Highly glycosylated by host. The high number of glycan on the protein is reffered to as 'glycan shield' because it contributes to hide protein sequence from adaptive immune system.</text>
</comment>
<comment type="PTM">
    <text evidence="1">Palmitoylation of the transmembrane protein and of Env polyprotein (prior to its proteolytic cleavage) is essential for their association with host cell membrane lipid rafts. Palmitoylation is therefore required for envelope trafficking to classical lipid rafts, but not for viral replication.</text>
</comment>
<comment type="PTM">
    <text evidence="1">Specific enzymatic cleavages in vivo yield mature proteins. Envelope glycoproteins are synthesized as an inactive precursor that is heavily N-glycosylated and processed likely by host cell furin in the Golgi to yield the mature SU and TM proteins. The cleavage site between SU and TM requires the minimal sequence [KR]-X-[KR]-R. About 2 of the 9 disulfide bonds of gp41 are reduced by P4HB/PDI, following binding to CD4 receptor.</text>
</comment>
<comment type="miscellaneous">
    <text evidence="1">Inhibitors targeting HIV-1 viral envelope proteins are used as antiretroviral drugs. Attachment of virions to the cell surface via non-specific interactions and CD4 binding can be blocked by inhibitors that include cyanovirin-N, cyclotriazadisulfonamide analogs, PRO 2000, TNX 355 and PRO 542. In addition, BMS 806 can block CD4-induced conformational changes. Env interactions with the coreceptor molecules can be targeted by CCR5 antagonists including SCH-D, maraviroc (UK 427857) and aplaviroc (GW 873140), and the CXCR4 antagonist AMD 070. Fusion of viral and cellular membranes can be inhibited by peptides such as enfuvirtide and tifuvirtide (T 1249). Resistance to inhibitors associated with mutations in Env are observed. Most of the time, single mutations confer only a modest reduction in drug susceptibility. Combination of several mutations is usually required to develop a high-level drug resistance.</text>
</comment>
<comment type="miscellaneous">
    <text evidence="1">HIV-1 lineages are divided in three main groups, M (for Major), O (for Outlier), and N (for New, or Non-M, Non-O). The vast majority of strains found worldwide belong to the group M. Group O seems to be endemic to and largely confined to Cameroon and neighboring countries in West Central Africa, where these viruses represent a small minority of HIV-1 strains. The group N is represented by a limited number of isolates from Cameroonian persons. The group M is further subdivided in 9 clades or subtypes (A to D, F to H, J and K).</text>
</comment>
<comment type="similarity">
    <text evidence="1">Belongs to the HIV-1 env protein family.</text>
</comment>
<comment type="online information" name="hivdb">
    <link uri="https://hivdb.stanford.edu"/>
    <text>HIV drug resistance database</text>
</comment>
<comment type="online information" name="HIV drug resistance mutations">
    <link uri="https://www.iasusa.org/hiv-drug-resistance/hiv-drug-resistance-mutations/"/>
</comment>
<accession>Q9Q714</accession>
<reference key="1">
    <citation type="journal article" date="2000" name="AIDS">
        <title>HIV-1 subtype H near-full length genome reference strains and analysis of subtype-H-containing inter-subtype recombinants.</title>
        <authorList>
            <person name="Janssens W."/>
            <person name="Laukkanen T."/>
            <person name="Salminen M.O."/>
            <person name="Carr J.K."/>
            <person name="Van der Auwera G."/>
            <person name="Heyndrickx L."/>
            <person name="van der Groen G."/>
            <person name="McCutchan F.E."/>
        </authorList>
    </citation>
    <scope>NUCLEOTIDE SEQUENCE [GENOMIC DNA]</scope>
</reference>
<reference key="2">
    <citation type="journal article" date="2003" name="APMIS">
        <title>Pathogens target DC-SIGN to influence their fate DC-SIGN functions as a pathogen receptor with broad specificity.</title>
        <authorList>
            <person name="Geijtenbeek T.B."/>
            <person name="van Kooyk Y."/>
        </authorList>
    </citation>
    <scope>REVIEW</scope>
</reference>
<reference key="3">
    <citation type="journal article" date="2003" name="Biochim. Biophys. Acta">
        <title>The HIV Env-mediated fusion reaction.</title>
        <authorList>
            <person name="Gallo S.A."/>
            <person name="Finnegan C.M."/>
            <person name="Viard M."/>
            <person name="Raviv Y."/>
            <person name="Dimitrov A."/>
            <person name="Rawat S.S."/>
            <person name="Puri A."/>
            <person name="Durell S."/>
            <person name="Blumenthal R."/>
        </authorList>
    </citation>
    <scope>REVIEW</scope>
</reference>
<reference key="4">
    <citation type="journal article" date="2005" name="Cell Death Differ.">
        <title>Mechanisms of apoptosis induction by the HIV-1 envelope.</title>
        <authorList>
            <person name="Perfettini J.-L."/>
            <person name="Castedo M."/>
            <person name="Roumier T."/>
            <person name="Andreau K."/>
            <person name="Nardacci R."/>
            <person name="Piacentini M."/>
            <person name="Kroemer G."/>
        </authorList>
    </citation>
    <scope>REVIEW</scope>
</reference>
<reference key="5">
    <citation type="journal article" date="2005" name="AIDS Res. Hum. Retroviruses">
        <title>V3: HIV's switch-hitter.</title>
        <authorList>
            <person name="Hartley O."/>
            <person name="Klasse P.J."/>
            <person name="Sattentau Q.J."/>
            <person name="Moore J.P."/>
        </authorList>
    </citation>
    <scope>REVIEW</scope>
</reference>
<reference key="6">
    <citation type="journal article" date="2005" name="Drugs">
        <title>Emerging drug targets for antiretroviral therapy.</title>
        <authorList>
            <person name="Reeves J.D."/>
            <person name="Piefer A.J."/>
        </authorList>
    </citation>
    <scope>REVIEW</scope>
</reference>
<reference key="7">
    <citation type="journal article" date="2006" name="EMBO J.">
        <title>HIV and the chemokine system: 10 years later.</title>
        <authorList>
            <person name="Lusso P."/>
        </authorList>
    </citation>
    <scope>REVIEW</scope>
</reference>
<keyword id="KW-0002">3D-structure</keyword>
<keyword id="KW-0014">AIDS</keyword>
<keyword id="KW-0053">Apoptosis</keyword>
<keyword id="KW-1165">Clathrin-mediated endocytosis of virus by host</keyword>
<keyword id="KW-0165">Cleavage on pair of basic residues</keyword>
<keyword id="KW-0175">Coiled coil</keyword>
<keyword id="KW-1015">Disulfide bond</keyword>
<keyword id="KW-1170">Fusion of virus membrane with host endosomal membrane</keyword>
<keyword id="KW-1168">Fusion of virus membrane with host membrane</keyword>
<keyword id="KW-0325">Glycoprotein</keyword>
<keyword id="KW-1032">Host cell membrane</keyword>
<keyword id="KW-1039">Host endosome</keyword>
<keyword id="KW-1043">Host membrane</keyword>
<keyword id="KW-0945">Host-virus interaction</keyword>
<keyword id="KW-0449">Lipoprotein</keyword>
<keyword id="KW-0472">Membrane</keyword>
<keyword id="KW-0564">Palmitate</keyword>
<keyword id="KW-0732">Signal</keyword>
<keyword id="KW-0812">Transmembrane</keyword>
<keyword id="KW-1133">Transmembrane helix</keyword>
<keyword id="KW-1161">Viral attachment to host cell</keyword>
<keyword id="KW-0261">Viral envelope protein</keyword>
<keyword id="KW-0899">Viral immunoevasion</keyword>
<keyword id="KW-1162">Viral penetration into host cytoplasm</keyword>
<keyword id="KW-0946">Virion</keyword>
<keyword id="KW-1164">Virus endocytosis by host</keyword>
<keyword id="KW-1160">Virus entry into host cell</keyword>
<organism>
    <name type="scientific">Human immunodeficiency virus type 1 group M subtype H (isolate VI991)</name>
    <name type="common">HIV-1</name>
    <dbReference type="NCBI Taxonomy" id="388888"/>
    <lineage>
        <taxon>Viruses</taxon>
        <taxon>Riboviria</taxon>
        <taxon>Pararnavirae</taxon>
        <taxon>Artverviricota</taxon>
        <taxon>Revtraviricetes</taxon>
        <taxon>Ortervirales</taxon>
        <taxon>Retroviridae</taxon>
        <taxon>Orthoretrovirinae</taxon>
        <taxon>Lentivirus</taxon>
        <taxon>Human immunodeficiency virus type 1</taxon>
    </lineage>
</organism>
<protein>
    <recommendedName>
        <fullName evidence="1">Envelope glycoprotein gp160</fullName>
    </recommendedName>
    <alternativeName>
        <fullName evidence="1">Env polyprotein</fullName>
    </alternativeName>
    <component>
        <recommendedName>
            <fullName evidence="1">Surface protein gp120</fullName>
            <shortName evidence="1">SU</shortName>
        </recommendedName>
        <alternativeName>
            <fullName evidence="1">Glycoprotein 120</fullName>
            <shortName evidence="1">gp120</shortName>
        </alternativeName>
    </component>
    <component>
        <recommendedName>
            <fullName evidence="1">Transmembrane protein gp41</fullName>
            <shortName evidence="1">TM</shortName>
        </recommendedName>
        <alternativeName>
            <fullName evidence="1">Glycoprotein 41</fullName>
            <shortName evidence="1">gp41</shortName>
        </alternativeName>
    </component>
</protein>
<gene>
    <name evidence="1" type="primary">env</name>
</gene>
<sequence length="859" mass="97577">METQRNYPSLWRWGTLILGMLLICSVVGNLWVTVYYGVPVWKEAKTTLFCASDAKAYDTERHNVWATHACVPTDPNPQEMVLENVTETFNMWVNDMVEQMHTDIISLWDQSLKPCVKLTPLCVTLDCSSVNATNVTKSNNSTDINIGEIQEQRNCSFNVTTAIRDKNQKVHALFYRADIVQIDEGERNKSDNHYRLINCNTSVIKQACPKVSFEPIPIHYCAPAGFAILKCNGKKFNGTGPCTNVSTVQCTHGIRPVVSTQLLLNGSLAEVEEVIIRSKNITDNTKNIIVQLNEPVQINCTRTGNNTRKSIRIGPGQAFYATGDIIGDIRRAYCNISGKQWNETLHKVITKLGSYFDNKTIILQPPAGGDIEIITHSFNCGGEFFYCNTTKLFNSTWTNSSYTNDTYNSNSTEDITGNITLQCKIKQIVNMWQRVGQAMYAPPIRGNITCISNITGLILTFDRNNTNNVTFRPGGGDMRDNWRSELYKYKVVKIEPLGVAPTEARRRVVEREKRAVGMGAFFLGFLGAAGSTMGAASITLTVQARQLLSGIVQQQSNLLRAIQAQQHMLQLTVWGIKQLQARVLAVERYLKDQQLLGIWGCSGKLICTTNVPWNSSWSNKSLDEIWDNMTWMEWDKQINNYTDEIYRLLEVSQNQQEKNEQDLLALDKWANLWNWFSITNWLWYIRIFIMIVGGIIGLRIVFAVLSIVNRVRQGYSPLSLQTLIPNQRGPDRPREIEEEGGEQDRDRSIRLVNGFLPLVWEDLRNLCLFSYRRLRDLLSIVARTVELLGRRGWEALKLLGNLLLYWGQELKNSAISLLNTTAIAVAEGTDRIIELVQRAWRAILHIPRRIRQGFERALL</sequence>
<proteinExistence type="evidence at protein level"/>
<evidence type="ECO:0000255" key="1">
    <source>
        <dbReference type="HAMAP-Rule" id="MF_04083"/>
    </source>
</evidence>
<evidence type="ECO:0000256" key="2">
    <source>
        <dbReference type="SAM" id="MobiDB-lite"/>
    </source>
</evidence>
<evidence type="ECO:0007829" key="3">
    <source>
        <dbReference type="PDB" id="3UJJ"/>
    </source>
</evidence>
<evidence type="ECO:0007829" key="4">
    <source>
        <dbReference type="PDB" id="8AED"/>
    </source>
</evidence>
<name>ENV_HV1V9</name>
<dbReference type="EMBL" id="AF190127">
    <property type="protein sequence ID" value="AAF18394.1"/>
    <property type="molecule type" value="Genomic_DNA"/>
</dbReference>
<dbReference type="PDB" id="3UJJ">
    <property type="method" value="X-ray"/>
    <property type="resolution" value="2.00 A"/>
    <property type="chains" value="P=305-327"/>
</dbReference>
<dbReference type="PDB" id="7Z7C">
    <property type="method" value="X-ray"/>
    <property type="resolution" value="1.22 A"/>
    <property type="chains" value="B=309-330"/>
</dbReference>
<dbReference type="PDB" id="8AED">
    <property type="method" value="X-ray"/>
    <property type="resolution" value="1.17 A"/>
    <property type="chains" value="C/D=306-329"/>
</dbReference>
<dbReference type="PDBsum" id="3UJJ"/>
<dbReference type="PDBsum" id="7Z7C"/>
<dbReference type="PDBsum" id="8AED"/>
<dbReference type="SMR" id="Q9Q714"/>
<dbReference type="GlyCosmos" id="Q9Q714">
    <property type="glycosylation" value="32 sites, No reported glycans"/>
</dbReference>
<dbReference type="EvolutionaryTrace" id="Q9Q714"/>
<dbReference type="Proteomes" id="UP000150531">
    <property type="component" value="Segment"/>
</dbReference>
<dbReference type="GO" id="GO:0044175">
    <property type="term" value="C:host cell endosome membrane"/>
    <property type="evidence" value="ECO:0007669"/>
    <property type="project" value="UniProtKB-SubCell"/>
</dbReference>
<dbReference type="GO" id="GO:0020002">
    <property type="term" value="C:host cell plasma membrane"/>
    <property type="evidence" value="ECO:0007669"/>
    <property type="project" value="UniProtKB-SubCell"/>
</dbReference>
<dbReference type="GO" id="GO:0016020">
    <property type="term" value="C:membrane"/>
    <property type="evidence" value="ECO:0007669"/>
    <property type="project" value="UniProtKB-UniRule"/>
</dbReference>
<dbReference type="GO" id="GO:0019031">
    <property type="term" value="C:viral envelope"/>
    <property type="evidence" value="ECO:0007669"/>
    <property type="project" value="UniProtKB-KW"/>
</dbReference>
<dbReference type="GO" id="GO:0055036">
    <property type="term" value="C:virion membrane"/>
    <property type="evidence" value="ECO:0007669"/>
    <property type="project" value="UniProtKB-SubCell"/>
</dbReference>
<dbReference type="GO" id="GO:0005198">
    <property type="term" value="F:structural molecule activity"/>
    <property type="evidence" value="ECO:0007669"/>
    <property type="project" value="UniProtKB-UniRule"/>
</dbReference>
<dbReference type="GO" id="GO:0075512">
    <property type="term" value="P:clathrin-dependent endocytosis of virus by host cell"/>
    <property type="evidence" value="ECO:0007669"/>
    <property type="project" value="UniProtKB-UniRule"/>
</dbReference>
<dbReference type="GO" id="GO:0039654">
    <property type="term" value="P:fusion of virus membrane with host endosome membrane"/>
    <property type="evidence" value="ECO:0007669"/>
    <property type="project" value="UniProtKB-UniRule"/>
</dbReference>
<dbReference type="GO" id="GO:0019064">
    <property type="term" value="P:fusion of virus membrane with host plasma membrane"/>
    <property type="evidence" value="ECO:0007669"/>
    <property type="project" value="UniProtKB-UniRule"/>
</dbReference>
<dbReference type="GO" id="GO:1903908">
    <property type="term" value="P:positive regulation of plasma membrane raft polarization"/>
    <property type="evidence" value="ECO:0007669"/>
    <property type="project" value="UniProtKB-UniRule"/>
</dbReference>
<dbReference type="GO" id="GO:1903911">
    <property type="term" value="P:positive regulation of receptor clustering"/>
    <property type="evidence" value="ECO:0007669"/>
    <property type="project" value="UniProtKB-UniRule"/>
</dbReference>
<dbReference type="GO" id="GO:0019082">
    <property type="term" value="P:viral protein processing"/>
    <property type="evidence" value="ECO:0007669"/>
    <property type="project" value="UniProtKB-UniRule"/>
</dbReference>
<dbReference type="GO" id="GO:0019062">
    <property type="term" value="P:virion attachment to host cell"/>
    <property type="evidence" value="ECO:0007669"/>
    <property type="project" value="UniProtKB-UniRule"/>
</dbReference>
<dbReference type="CDD" id="cd09909">
    <property type="entry name" value="HIV-1-like_HR1-HR2"/>
    <property type="match status" value="1"/>
</dbReference>
<dbReference type="FunFam" id="1.10.287.210:FF:000001">
    <property type="entry name" value="Envelope glycoprotein gp160"/>
    <property type="match status" value="1"/>
</dbReference>
<dbReference type="FunFam" id="1.20.5.490:FF:000001">
    <property type="entry name" value="Envelope glycoprotein gp160"/>
    <property type="match status" value="1"/>
</dbReference>
<dbReference type="FunFam" id="2.170.40.20:FF:000003">
    <property type="entry name" value="Envelope glycoprotein gp160"/>
    <property type="match status" value="1"/>
</dbReference>
<dbReference type="FunFam" id="2.170.40.20:FF:000004">
    <property type="entry name" value="Envelope glycoprotein gp160"/>
    <property type="match status" value="1"/>
</dbReference>
<dbReference type="Gene3D" id="1.10.287.210">
    <property type="match status" value="1"/>
</dbReference>
<dbReference type="Gene3D" id="2.170.40.20">
    <property type="entry name" value="Human immunodeficiency virus 1, Gp160, envelope glycoprotein"/>
    <property type="match status" value="2"/>
</dbReference>
<dbReference type="Gene3D" id="1.20.5.490">
    <property type="entry name" value="Single helix bin"/>
    <property type="match status" value="1"/>
</dbReference>
<dbReference type="HAMAP" id="MF_04083">
    <property type="entry name" value="HIV_ENV"/>
    <property type="match status" value="1"/>
</dbReference>
<dbReference type="InterPro" id="IPR036377">
    <property type="entry name" value="Gp120_core_sf"/>
</dbReference>
<dbReference type="InterPro" id="IPR037527">
    <property type="entry name" value="Gp160"/>
</dbReference>
<dbReference type="InterPro" id="IPR000328">
    <property type="entry name" value="GP41-like"/>
</dbReference>
<dbReference type="InterPro" id="IPR000777">
    <property type="entry name" value="HIV1_Gp120"/>
</dbReference>
<dbReference type="Pfam" id="PF00516">
    <property type="entry name" value="GP120"/>
    <property type="match status" value="1"/>
</dbReference>
<dbReference type="Pfam" id="PF00517">
    <property type="entry name" value="GP41"/>
    <property type="match status" value="1"/>
</dbReference>
<dbReference type="SUPFAM" id="SSF56502">
    <property type="entry name" value="gp120 core"/>
    <property type="match status" value="2"/>
</dbReference>
<dbReference type="SUPFAM" id="SSF58069">
    <property type="entry name" value="Virus ectodomain"/>
    <property type="match status" value="1"/>
</dbReference>
<organismHost>
    <name type="scientific">Homo sapiens</name>
    <name type="common">Human</name>
    <dbReference type="NCBI Taxonomy" id="9606"/>
</organismHost>
<feature type="signal peptide" evidence="1">
    <location>
        <begin position="1"/>
        <end position="28"/>
    </location>
</feature>
<feature type="chain" id="PRO_0000244693" description="Envelope glycoprotein gp160" evidence="1">
    <location>
        <begin position="29"/>
        <end position="859"/>
    </location>
</feature>
<feature type="chain" id="PRO_0000244694" description="Surface protein gp120" evidence="1">
    <location>
        <begin position="29"/>
        <end position="514"/>
    </location>
</feature>
<feature type="chain" id="PRO_0000244695" description="Transmembrane protein gp41" evidence="1">
    <location>
        <begin position="515"/>
        <end position="859"/>
    </location>
</feature>
<feature type="topological domain" description="Extracellular" evidence="1">
    <location>
        <begin position="29"/>
        <end position="687"/>
    </location>
</feature>
<feature type="transmembrane region" description="Helical" evidence="1">
    <location>
        <begin position="688"/>
        <end position="708"/>
    </location>
</feature>
<feature type="topological domain" description="Cytoplasmic" evidence="1">
    <location>
        <begin position="709"/>
        <end position="859"/>
    </location>
</feature>
<feature type="region of interest" description="V1" evidence="1">
    <location>
        <begin position="127"/>
        <end position="154"/>
    </location>
</feature>
<feature type="region of interest" description="V2" evidence="1">
    <location>
        <begin position="155"/>
        <end position="199"/>
    </location>
</feature>
<feature type="region of interest" description="V3" evidence="1">
    <location>
        <begin position="300"/>
        <end position="333"/>
    </location>
</feature>
<feature type="region of interest" description="CD4-binding loop" evidence="1">
    <location>
        <begin position="366"/>
        <end position="376"/>
    </location>
</feature>
<feature type="region of interest" description="V4" evidence="1">
    <location>
        <begin position="387"/>
        <end position="423"/>
    </location>
</feature>
<feature type="region of interest" description="V5" evidence="1">
    <location>
        <begin position="466"/>
        <end position="474"/>
    </location>
</feature>
<feature type="region of interest" description="Fusion peptide" evidence="1">
    <location>
        <begin position="515"/>
        <end position="535"/>
    </location>
</feature>
<feature type="region of interest" description="Immunosuppression" evidence="1">
    <location>
        <begin position="577"/>
        <end position="595"/>
    </location>
</feature>
<feature type="region of interest" description="MPER; binding to GalCer" evidence="1">
    <location>
        <begin position="665"/>
        <end position="686"/>
    </location>
</feature>
<feature type="region of interest" description="Disordered" evidence="2">
    <location>
        <begin position="724"/>
        <end position="743"/>
    </location>
</feature>
<feature type="coiled-coil region" evidence="1">
    <location>
        <begin position="636"/>
        <end position="670"/>
    </location>
</feature>
<feature type="short sequence motif" description="YXXL motif; contains endocytosis signal" evidence="1">
    <location>
        <begin position="715"/>
        <end position="718"/>
    </location>
</feature>
<feature type="short sequence motif" description="Di-leucine internalization motif" evidence="1">
    <location>
        <begin position="858"/>
        <end position="859"/>
    </location>
</feature>
<feature type="site" description="Cleavage; by host furin" evidence="1">
    <location>
        <begin position="514"/>
        <end position="515"/>
    </location>
</feature>
<feature type="lipid moiety-binding region" description="S-palmitoyl cysteine; by host" evidence="1">
    <location>
        <position position="767"/>
    </location>
</feature>
<feature type="glycosylation site" description="N-linked (GlcNAc...) asparagine; by host" evidence="1">
    <location>
        <position position="84"/>
    </location>
</feature>
<feature type="glycosylation site" description="N-linked (GlcNAc...) asparagine; by host" evidence="1">
    <location>
        <position position="131"/>
    </location>
</feature>
<feature type="glycosylation site" description="N-linked (GlcNAc...) asparagine; by host" evidence="1">
    <location>
        <position position="134"/>
    </location>
</feature>
<feature type="glycosylation site" description="N-linked (GlcNAc...) asparagine; by host" evidence="1">
    <location>
        <position position="139"/>
    </location>
</feature>
<feature type="glycosylation site" description="N-linked (GlcNAc...) asparagine; by host" evidence="1">
    <location>
        <position position="140"/>
    </location>
</feature>
<feature type="glycosylation site" description="N-linked (GlcNAc...) asparagine; by host" evidence="1">
    <location>
        <position position="154"/>
    </location>
</feature>
<feature type="glycosylation site" description="N-linked (GlcNAc...) asparagine; by host" evidence="1">
    <location>
        <position position="158"/>
    </location>
</feature>
<feature type="glycosylation site" description="N-linked (GlcNAc...) asparagine; by host" evidence="1">
    <location>
        <position position="188"/>
    </location>
</feature>
<feature type="glycosylation site" description="N-linked (GlcNAc...) asparagine; by host" evidence="1">
    <location>
        <position position="200"/>
    </location>
</feature>
<feature type="glycosylation site" description="N-linked (GlcNAc...) asparagine; by host" evidence="1">
    <location>
        <position position="237"/>
    </location>
</feature>
<feature type="glycosylation site" description="N-linked (GlcNAc...) asparagine; by host" evidence="1">
    <location>
        <position position="244"/>
    </location>
</feature>
<feature type="glycosylation site" description="N-linked (GlcNAc...) asparagine; by host" evidence="1">
    <location>
        <position position="265"/>
    </location>
</feature>
<feature type="glycosylation site" description="N-linked (GlcNAc...) asparagine; by host" evidence="1">
    <location>
        <position position="280"/>
    </location>
</feature>
<feature type="glycosylation site" description="N-linked (GlcNAc...) asparagine; by host" evidence="1">
    <location>
        <position position="299"/>
    </location>
</feature>
<feature type="glycosylation site" description="N-linked (GlcNAc...) asparagine; by host" evidence="1">
    <location>
        <position position="305"/>
    </location>
</feature>
<feature type="glycosylation site" description="N-linked (GlcNAc...) asparagine; by host" evidence="1">
    <location>
        <position position="335"/>
    </location>
</feature>
<feature type="glycosylation site" description="N-linked (GlcNAc...) asparagine; by host" evidence="1">
    <location>
        <position position="342"/>
    </location>
</feature>
<feature type="glycosylation site" description="N-linked (GlcNAc...) asparagine; by host" evidence="1">
    <location>
        <position position="358"/>
    </location>
</feature>
<feature type="glycosylation site" description="N-linked (GlcNAc...) asparagine; by host" evidence="1">
    <location>
        <position position="388"/>
    </location>
</feature>
<feature type="glycosylation site" description="N-linked (GlcNAc...) asparagine; by host" evidence="1">
    <location>
        <position position="394"/>
    </location>
</feature>
<feature type="glycosylation site" description="N-linked (GlcNAc...) asparagine; by host" evidence="1">
    <location>
        <position position="399"/>
    </location>
</feature>
<feature type="glycosylation site" description="N-linked (GlcNAc...) asparagine; by host" evidence="1">
    <location>
        <position position="404"/>
    </location>
</feature>
<feature type="glycosylation site" description="N-linked (GlcNAc...) asparagine; by host" evidence="1">
    <location>
        <position position="410"/>
    </location>
</feature>
<feature type="glycosylation site" description="N-linked (GlcNAc...) asparagine; by host" evidence="1">
    <location>
        <position position="418"/>
    </location>
</feature>
<feature type="glycosylation site" description="N-linked (GlcNAc...) asparagine; by host" evidence="1">
    <location>
        <position position="447"/>
    </location>
</feature>
<feature type="glycosylation site" description="N-linked (GlcNAc...) asparagine; by host" evidence="1">
    <location>
        <position position="453"/>
    </location>
</feature>
<feature type="glycosylation site" description="N-linked (GlcNAc...) asparagine; by host" evidence="1">
    <location>
        <position position="464"/>
    </location>
</feature>
<feature type="glycosylation site" description="N-linked (GlcNAc...) asparagine; by host" evidence="1">
    <location>
        <position position="468"/>
    </location>
</feature>
<feature type="glycosylation site" description="N-linked (GlcNAc...) asparagine; by host" evidence="1">
    <location>
        <position position="614"/>
    </location>
</feature>
<feature type="glycosylation site" description="N-linked (GlcNAc...) asparagine; by host" evidence="1">
    <location>
        <position position="619"/>
    </location>
</feature>
<feature type="glycosylation site" description="N-linked (GlcNAc...) asparagine; by host" evidence="1">
    <location>
        <position position="628"/>
    </location>
</feature>
<feature type="glycosylation site" description="N-linked (GlcNAc...) asparagine; by host" evidence="1">
    <location>
        <position position="640"/>
    </location>
</feature>
<feature type="disulfide bond" evidence="1">
    <location>
        <begin position="50"/>
        <end position="70"/>
    </location>
</feature>
<feature type="disulfide bond" evidence="1">
    <location>
        <begin position="115"/>
        <end position="208"/>
    </location>
</feature>
<feature type="disulfide bond" evidence="1">
    <location>
        <begin position="122"/>
        <end position="199"/>
    </location>
</feature>
<feature type="disulfide bond" evidence="1">
    <location>
        <begin position="127"/>
        <end position="155"/>
    </location>
</feature>
<feature type="disulfide bond" evidence="1">
    <location>
        <begin position="221"/>
        <end position="250"/>
    </location>
</feature>
<feature type="disulfide bond" evidence="1">
    <location>
        <begin position="231"/>
        <end position="242"/>
    </location>
</feature>
<feature type="disulfide bond" evidence="1">
    <location>
        <begin position="300"/>
        <end position="334"/>
    </location>
</feature>
<feature type="disulfide bond" evidence="1">
    <location>
        <begin position="380"/>
        <end position="450"/>
    </location>
</feature>
<feature type="disulfide bond" evidence="1">
    <location>
        <begin position="387"/>
        <end position="423"/>
    </location>
</feature>
<feature type="disulfide bond" evidence="1">
    <location>
        <begin position="601"/>
        <end position="607"/>
    </location>
</feature>
<feature type="strand" evidence="3">
    <location>
        <begin position="312"/>
        <end position="314"/>
    </location>
</feature>
<feature type="helix" evidence="4">
    <location>
        <begin position="317"/>
        <end position="327"/>
    </location>
</feature>